<organism>
    <name type="scientific">Erwinia tasmaniensis (strain DSM 17950 / CFBP 7177 / CIP 109463 / NCPPB 4357 / Et1/99)</name>
    <dbReference type="NCBI Taxonomy" id="465817"/>
    <lineage>
        <taxon>Bacteria</taxon>
        <taxon>Pseudomonadati</taxon>
        <taxon>Pseudomonadota</taxon>
        <taxon>Gammaproteobacteria</taxon>
        <taxon>Enterobacterales</taxon>
        <taxon>Erwiniaceae</taxon>
        <taxon>Erwinia</taxon>
    </lineage>
</organism>
<reference key="1">
    <citation type="journal article" date="2008" name="Environ. Microbiol.">
        <title>The genome of Erwinia tasmaniensis strain Et1/99, a non-pathogenic bacterium in the genus Erwinia.</title>
        <authorList>
            <person name="Kube M."/>
            <person name="Migdoll A.M."/>
            <person name="Mueller I."/>
            <person name="Kuhl H."/>
            <person name="Beck A."/>
            <person name="Reinhardt R."/>
            <person name="Geider K."/>
        </authorList>
    </citation>
    <scope>NUCLEOTIDE SEQUENCE [LARGE SCALE GENOMIC DNA]</scope>
    <source>
        <strain>DSM 17950 / CFBP 7177 / CIP 109463 / NCPPB 4357 / Et1/99</strain>
    </source>
</reference>
<name>PRMA_ERWT9</name>
<sequence length="293" mass="31745">MPWIQMKMNTSGAQAEELGDALIENGAVSVTFQDTHDNPVFEPLPGETRLWGDTDVIGLFDAETDMADVIAGLEHHPLLGSGFHHKIEQIEDKDWEREWMTNFHPMRFGQRLWICPSWRDVPDPNAVNVMLDPGLAFGTGTHPTTALCLTWLDGLDLAGKTIIDFGCGSGILAIAALKLGAAAAIGIDIDPQAIQASRDNAERNGVSDRLSLYLPHQQPDNLIADVVVANILAGPLRELAPLISVLPKRGGHLGLSGVLASQASGVCEAYADLFELDAVAEKEEWCRITGVRR</sequence>
<feature type="chain" id="PRO_1000132796" description="Ribosomal protein L11 methyltransferase">
    <location>
        <begin position="1"/>
        <end position="293"/>
    </location>
</feature>
<feature type="binding site" evidence="1">
    <location>
        <position position="145"/>
    </location>
    <ligand>
        <name>S-adenosyl-L-methionine</name>
        <dbReference type="ChEBI" id="CHEBI:59789"/>
    </ligand>
</feature>
<feature type="binding site" evidence="1">
    <location>
        <position position="166"/>
    </location>
    <ligand>
        <name>S-adenosyl-L-methionine</name>
        <dbReference type="ChEBI" id="CHEBI:59789"/>
    </ligand>
</feature>
<feature type="binding site" evidence="1">
    <location>
        <position position="188"/>
    </location>
    <ligand>
        <name>S-adenosyl-L-methionine</name>
        <dbReference type="ChEBI" id="CHEBI:59789"/>
    </ligand>
</feature>
<feature type="binding site" evidence="1">
    <location>
        <position position="230"/>
    </location>
    <ligand>
        <name>S-adenosyl-L-methionine</name>
        <dbReference type="ChEBI" id="CHEBI:59789"/>
    </ligand>
</feature>
<comment type="function">
    <text evidence="1">Methylates ribosomal protein L11.</text>
</comment>
<comment type="catalytic activity">
    <reaction evidence="1">
        <text>L-lysyl-[protein] + 3 S-adenosyl-L-methionine = N(6),N(6),N(6)-trimethyl-L-lysyl-[protein] + 3 S-adenosyl-L-homocysteine + 3 H(+)</text>
        <dbReference type="Rhea" id="RHEA:54192"/>
        <dbReference type="Rhea" id="RHEA-COMP:9752"/>
        <dbReference type="Rhea" id="RHEA-COMP:13826"/>
        <dbReference type="ChEBI" id="CHEBI:15378"/>
        <dbReference type="ChEBI" id="CHEBI:29969"/>
        <dbReference type="ChEBI" id="CHEBI:57856"/>
        <dbReference type="ChEBI" id="CHEBI:59789"/>
        <dbReference type="ChEBI" id="CHEBI:61961"/>
    </reaction>
</comment>
<comment type="subcellular location">
    <subcellularLocation>
        <location evidence="1">Cytoplasm</location>
    </subcellularLocation>
</comment>
<comment type="similarity">
    <text evidence="1">Belongs to the methyltransferase superfamily. PrmA family.</text>
</comment>
<proteinExistence type="inferred from homology"/>
<gene>
    <name evidence="1" type="primary">prmA</name>
    <name type="ordered locus">ETA_02740</name>
</gene>
<protein>
    <recommendedName>
        <fullName evidence="1">Ribosomal protein L11 methyltransferase</fullName>
        <shortName evidence="1">L11 Mtase</shortName>
        <ecNumber evidence="1">2.1.1.-</ecNumber>
    </recommendedName>
</protein>
<accession>B2VL75</accession>
<evidence type="ECO:0000255" key="1">
    <source>
        <dbReference type="HAMAP-Rule" id="MF_00735"/>
    </source>
</evidence>
<keyword id="KW-0963">Cytoplasm</keyword>
<keyword id="KW-0489">Methyltransferase</keyword>
<keyword id="KW-1185">Reference proteome</keyword>
<keyword id="KW-0949">S-adenosyl-L-methionine</keyword>
<keyword id="KW-0808">Transferase</keyword>
<dbReference type="EC" id="2.1.1.-" evidence="1"/>
<dbReference type="EMBL" id="CU468135">
    <property type="protein sequence ID" value="CAO95320.1"/>
    <property type="molecule type" value="Genomic_DNA"/>
</dbReference>
<dbReference type="RefSeq" id="WP_012440039.1">
    <property type="nucleotide sequence ID" value="NC_010694.1"/>
</dbReference>
<dbReference type="SMR" id="B2VL75"/>
<dbReference type="STRING" id="465817.ETA_02740"/>
<dbReference type="KEGG" id="eta:ETA_02740"/>
<dbReference type="eggNOG" id="COG2264">
    <property type="taxonomic scope" value="Bacteria"/>
</dbReference>
<dbReference type="HOGENOM" id="CLU_049382_4_1_6"/>
<dbReference type="OrthoDB" id="9785995at2"/>
<dbReference type="Proteomes" id="UP000001726">
    <property type="component" value="Chromosome"/>
</dbReference>
<dbReference type="GO" id="GO:0005829">
    <property type="term" value="C:cytosol"/>
    <property type="evidence" value="ECO:0007669"/>
    <property type="project" value="TreeGrafter"/>
</dbReference>
<dbReference type="GO" id="GO:0016279">
    <property type="term" value="F:protein-lysine N-methyltransferase activity"/>
    <property type="evidence" value="ECO:0007669"/>
    <property type="project" value="TreeGrafter"/>
</dbReference>
<dbReference type="GO" id="GO:0032259">
    <property type="term" value="P:methylation"/>
    <property type="evidence" value="ECO:0007669"/>
    <property type="project" value="UniProtKB-KW"/>
</dbReference>
<dbReference type="CDD" id="cd02440">
    <property type="entry name" value="AdoMet_MTases"/>
    <property type="match status" value="1"/>
</dbReference>
<dbReference type="Gene3D" id="3.40.50.150">
    <property type="entry name" value="Vaccinia Virus protein VP39"/>
    <property type="match status" value="1"/>
</dbReference>
<dbReference type="HAMAP" id="MF_00735">
    <property type="entry name" value="Methyltr_PrmA"/>
    <property type="match status" value="1"/>
</dbReference>
<dbReference type="InterPro" id="IPR050078">
    <property type="entry name" value="Ribosomal_L11_MeTrfase_PrmA"/>
</dbReference>
<dbReference type="InterPro" id="IPR004498">
    <property type="entry name" value="Ribosomal_PrmA_MeTrfase"/>
</dbReference>
<dbReference type="InterPro" id="IPR029063">
    <property type="entry name" value="SAM-dependent_MTases_sf"/>
</dbReference>
<dbReference type="NCBIfam" id="TIGR00406">
    <property type="entry name" value="prmA"/>
    <property type="match status" value="1"/>
</dbReference>
<dbReference type="PANTHER" id="PTHR43648">
    <property type="entry name" value="ELECTRON TRANSFER FLAVOPROTEIN BETA SUBUNIT LYSINE METHYLTRANSFERASE"/>
    <property type="match status" value="1"/>
</dbReference>
<dbReference type="PANTHER" id="PTHR43648:SF1">
    <property type="entry name" value="ELECTRON TRANSFER FLAVOPROTEIN BETA SUBUNIT LYSINE METHYLTRANSFERASE"/>
    <property type="match status" value="1"/>
</dbReference>
<dbReference type="Pfam" id="PF06325">
    <property type="entry name" value="PrmA"/>
    <property type="match status" value="1"/>
</dbReference>
<dbReference type="PIRSF" id="PIRSF000401">
    <property type="entry name" value="RPL11_MTase"/>
    <property type="match status" value="1"/>
</dbReference>
<dbReference type="SUPFAM" id="SSF53335">
    <property type="entry name" value="S-adenosyl-L-methionine-dependent methyltransferases"/>
    <property type="match status" value="1"/>
</dbReference>